<accession>Q1ACL6</accession>
<protein>
    <recommendedName>
        <fullName evidence="1">Photosystem II reaction center protein K</fullName>
        <shortName evidence="1">PSII-K</shortName>
    </recommendedName>
</protein>
<reference key="1">
    <citation type="journal article" date="2006" name="Mol. Biol. Evol.">
        <title>The chloroplast genome sequence of Chara vulgaris sheds new light into the closest green algal relatives of land plants.</title>
        <authorList>
            <person name="Turmel M."/>
            <person name="Otis C."/>
            <person name="Lemieux C."/>
        </authorList>
    </citation>
    <scope>NUCLEOTIDE SEQUENCE [LARGE SCALE GENOMIC DNA]</scope>
</reference>
<gene>
    <name evidence="1" type="primary">psbK</name>
</gene>
<geneLocation type="chloroplast"/>
<feature type="propeptide" id="PRO_0000276128" evidence="1">
    <location>
        <begin position="1"/>
        <end position="22"/>
    </location>
</feature>
<feature type="chain" id="PRO_0000276129" description="Photosystem II reaction center protein K" evidence="1">
    <location>
        <begin position="23"/>
        <end position="59"/>
    </location>
</feature>
<feature type="transmembrane region" description="Helical" evidence="1">
    <location>
        <begin position="30"/>
        <end position="50"/>
    </location>
</feature>
<evidence type="ECO:0000255" key="1">
    <source>
        <dbReference type="HAMAP-Rule" id="MF_00441"/>
    </source>
</evidence>
<evidence type="ECO:0000305" key="2"/>
<organism>
    <name type="scientific">Chara vulgaris</name>
    <name type="common">Common stonewort</name>
    <dbReference type="NCBI Taxonomy" id="55564"/>
    <lineage>
        <taxon>Eukaryota</taxon>
        <taxon>Viridiplantae</taxon>
        <taxon>Streptophyta</taxon>
        <taxon>Charophyceae</taxon>
        <taxon>Charales</taxon>
        <taxon>Characeae</taxon>
        <taxon>Chara</taxon>
    </lineage>
</organism>
<proteinExistence type="inferred from homology"/>
<comment type="function">
    <text evidence="1">One of the components of the core complex of photosystem II (PSII). PSII is a light-driven water:plastoquinone oxidoreductase that uses light energy to abstract electrons from H(2)O, generating O(2) and a proton gradient subsequently used for ATP formation. It consists of a core antenna complex that captures photons, and an electron transfer chain that converts photonic excitation into a charge separation.</text>
</comment>
<comment type="subunit">
    <text evidence="1">PSII is composed of 1 copy each of membrane proteins PsbA, PsbB, PsbC, PsbD, PsbE, PsbF, PsbH, PsbI, PsbJ, PsbK, PsbL, PsbM, PsbT, PsbX, PsbY, PsbZ, Psb30/Ycf12, at least 3 peripheral proteins of the oxygen-evolving complex and a large number of cofactors. It forms dimeric complexes.</text>
</comment>
<comment type="subcellular location">
    <subcellularLocation>
        <location evidence="1">Plastid</location>
        <location evidence="1">Chloroplast thylakoid membrane</location>
        <topology evidence="1">Single-pass membrane protein</topology>
    </subcellularLocation>
</comment>
<comment type="similarity">
    <text evidence="1">Belongs to the PsbK family.</text>
</comment>
<comment type="sequence caution" evidence="2">
    <conflict type="erroneous initiation">
        <sequence resource="EMBL-CDS" id="ABA61959"/>
    </conflict>
    <text>Extended N-terminus.</text>
</comment>
<name>PSBK_CHAVU</name>
<keyword id="KW-0150">Chloroplast</keyword>
<keyword id="KW-0472">Membrane</keyword>
<keyword id="KW-0602">Photosynthesis</keyword>
<keyword id="KW-0604">Photosystem II</keyword>
<keyword id="KW-0934">Plastid</keyword>
<keyword id="KW-0674">Reaction center</keyword>
<keyword id="KW-0793">Thylakoid</keyword>
<keyword id="KW-0812">Transmembrane</keyword>
<keyword id="KW-1133">Transmembrane helix</keyword>
<sequence>MILYSHLSTLIDIDLSNNIFLAKLPEAYAIFDPLVDVMPVIPVFFLLLAFVWQASVSFR</sequence>
<dbReference type="EMBL" id="DQ229107">
    <property type="protein sequence ID" value="ABA61959.1"/>
    <property type="status" value="ALT_INIT"/>
    <property type="molecule type" value="Genomic_DNA"/>
</dbReference>
<dbReference type="RefSeq" id="YP_635731.1">
    <property type="nucleotide sequence ID" value="NC_008097.1"/>
</dbReference>
<dbReference type="SMR" id="Q1ACL6"/>
<dbReference type="GeneID" id="4100325"/>
<dbReference type="GO" id="GO:0009535">
    <property type="term" value="C:chloroplast thylakoid membrane"/>
    <property type="evidence" value="ECO:0007669"/>
    <property type="project" value="UniProtKB-SubCell"/>
</dbReference>
<dbReference type="GO" id="GO:0009539">
    <property type="term" value="C:photosystem II reaction center"/>
    <property type="evidence" value="ECO:0007669"/>
    <property type="project" value="InterPro"/>
</dbReference>
<dbReference type="GO" id="GO:0015979">
    <property type="term" value="P:photosynthesis"/>
    <property type="evidence" value="ECO:0007669"/>
    <property type="project" value="UniProtKB-UniRule"/>
</dbReference>
<dbReference type="HAMAP" id="MF_00441">
    <property type="entry name" value="PSII_PsbK"/>
    <property type="match status" value="1"/>
</dbReference>
<dbReference type="InterPro" id="IPR003687">
    <property type="entry name" value="PSII_PsbK"/>
</dbReference>
<dbReference type="InterPro" id="IPR037270">
    <property type="entry name" value="PSII_PsbK_sf"/>
</dbReference>
<dbReference type="NCBIfam" id="NF002715">
    <property type="entry name" value="PRK02553.1"/>
    <property type="match status" value="1"/>
</dbReference>
<dbReference type="PANTHER" id="PTHR35325">
    <property type="match status" value="1"/>
</dbReference>
<dbReference type="PANTHER" id="PTHR35325:SF1">
    <property type="entry name" value="PHOTOSYSTEM II REACTION CENTER PROTEIN K"/>
    <property type="match status" value="1"/>
</dbReference>
<dbReference type="Pfam" id="PF02533">
    <property type="entry name" value="PsbK"/>
    <property type="match status" value="1"/>
</dbReference>
<dbReference type="SUPFAM" id="SSF161037">
    <property type="entry name" value="Photosystem II reaction center protein K, PsbK"/>
    <property type="match status" value="1"/>
</dbReference>